<comment type="function">
    <text evidence="1">Involved in the binding of tRNA to the ribosomes.</text>
</comment>
<comment type="subunit">
    <text evidence="1">Part of the 30S ribosomal subunit.</text>
</comment>
<comment type="similarity">
    <text evidence="1">Belongs to the universal ribosomal protein uS10 family.</text>
</comment>
<reference key="1">
    <citation type="submission" date="2008-05" db="EMBL/GenBank/DDBJ databases">
        <title>Complete sequence of Shigella boydii serotype 18 strain BS512.</title>
        <authorList>
            <person name="Rasko D.A."/>
            <person name="Rosovitz M."/>
            <person name="Maurelli A.T."/>
            <person name="Myers G."/>
            <person name="Seshadri R."/>
            <person name="Cer R."/>
            <person name="Jiang L."/>
            <person name="Ravel J."/>
            <person name="Sebastian Y."/>
        </authorList>
    </citation>
    <scope>NUCLEOTIDE SEQUENCE [LARGE SCALE GENOMIC DNA]</scope>
    <source>
        <strain>CDC 3083-94 / BS512</strain>
    </source>
</reference>
<gene>
    <name evidence="1" type="primary">rpsJ</name>
    <name type="ordered locus">SbBS512_E3706</name>
</gene>
<keyword id="KW-1185">Reference proteome</keyword>
<keyword id="KW-0687">Ribonucleoprotein</keyword>
<keyword id="KW-0689">Ribosomal protein</keyword>
<organism>
    <name type="scientific">Shigella boydii serotype 18 (strain CDC 3083-94 / BS512)</name>
    <dbReference type="NCBI Taxonomy" id="344609"/>
    <lineage>
        <taxon>Bacteria</taxon>
        <taxon>Pseudomonadati</taxon>
        <taxon>Pseudomonadota</taxon>
        <taxon>Gammaproteobacteria</taxon>
        <taxon>Enterobacterales</taxon>
        <taxon>Enterobacteriaceae</taxon>
        <taxon>Shigella</taxon>
    </lineage>
</organism>
<proteinExistence type="inferred from homology"/>
<sequence>MQNQRIRIRLKAFDHRLIDQATAEIVETAKRTGAQVRGPIPLPTRKERFTVLISPHVNKDARDQYEIRTHLRLVDIVEPTEKTVDALMRLDLAAGVDVQISLG</sequence>
<evidence type="ECO:0000255" key="1">
    <source>
        <dbReference type="HAMAP-Rule" id="MF_00508"/>
    </source>
</evidence>
<evidence type="ECO:0000305" key="2"/>
<protein>
    <recommendedName>
        <fullName evidence="1">Small ribosomal subunit protein uS10</fullName>
    </recommendedName>
    <alternativeName>
        <fullName evidence="2">30S ribosomal protein S10</fullName>
    </alternativeName>
</protein>
<dbReference type="EMBL" id="CP001063">
    <property type="protein sequence ID" value="ACD10256.1"/>
    <property type="molecule type" value="Genomic_DNA"/>
</dbReference>
<dbReference type="RefSeq" id="WP_001181004.1">
    <property type="nucleotide sequence ID" value="NC_010658.1"/>
</dbReference>
<dbReference type="SMR" id="B2U2T9"/>
<dbReference type="STRING" id="344609.SbBS512_E3706"/>
<dbReference type="GeneID" id="93778666"/>
<dbReference type="KEGG" id="sbc:SbBS512_E3706"/>
<dbReference type="HOGENOM" id="CLU_122625_1_3_6"/>
<dbReference type="Proteomes" id="UP000001030">
    <property type="component" value="Chromosome"/>
</dbReference>
<dbReference type="GO" id="GO:1990904">
    <property type="term" value="C:ribonucleoprotein complex"/>
    <property type="evidence" value="ECO:0007669"/>
    <property type="project" value="UniProtKB-KW"/>
</dbReference>
<dbReference type="GO" id="GO:0005840">
    <property type="term" value="C:ribosome"/>
    <property type="evidence" value="ECO:0007669"/>
    <property type="project" value="UniProtKB-KW"/>
</dbReference>
<dbReference type="GO" id="GO:0003735">
    <property type="term" value="F:structural constituent of ribosome"/>
    <property type="evidence" value="ECO:0007669"/>
    <property type="project" value="InterPro"/>
</dbReference>
<dbReference type="GO" id="GO:0000049">
    <property type="term" value="F:tRNA binding"/>
    <property type="evidence" value="ECO:0007669"/>
    <property type="project" value="UniProtKB-UniRule"/>
</dbReference>
<dbReference type="GO" id="GO:0006412">
    <property type="term" value="P:translation"/>
    <property type="evidence" value="ECO:0007669"/>
    <property type="project" value="UniProtKB-UniRule"/>
</dbReference>
<dbReference type="FunFam" id="3.30.70.600:FF:000001">
    <property type="entry name" value="30S ribosomal protein S10"/>
    <property type="match status" value="1"/>
</dbReference>
<dbReference type="Gene3D" id="3.30.70.600">
    <property type="entry name" value="Ribosomal protein S10 domain"/>
    <property type="match status" value="1"/>
</dbReference>
<dbReference type="HAMAP" id="MF_00508">
    <property type="entry name" value="Ribosomal_uS10"/>
    <property type="match status" value="1"/>
</dbReference>
<dbReference type="InterPro" id="IPR001848">
    <property type="entry name" value="Ribosomal_uS10"/>
</dbReference>
<dbReference type="InterPro" id="IPR018268">
    <property type="entry name" value="Ribosomal_uS10_CS"/>
</dbReference>
<dbReference type="InterPro" id="IPR027486">
    <property type="entry name" value="Ribosomal_uS10_dom"/>
</dbReference>
<dbReference type="InterPro" id="IPR036838">
    <property type="entry name" value="Ribosomal_uS10_dom_sf"/>
</dbReference>
<dbReference type="NCBIfam" id="NF001861">
    <property type="entry name" value="PRK00596.1"/>
    <property type="match status" value="1"/>
</dbReference>
<dbReference type="NCBIfam" id="TIGR01049">
    <property type="entry name" value="rpsJ_bact"/>
    <property type="match status" value="1"/>
</dbReference>
<dbReference type="PANTHER" id="PTHR11700">
    <property type="entry name" value="30S RIBOSOMAL PROTEIN S10 FAMILY MEMBER"/>
    <property type="match status" value="1"/>
</dbReference>
<dbReference type="Pfam" id="PF00338">
    <property type="entry name" value="Ribosomal_S10"/>
    <property type="match status" value="1"/>
</dbReference>
<dbReference type="PRINTS" id="PR00971">
    <property type="entry name" value="RIBOSOMALS10"/>
</dbReference>
<dbReference type="SMART" id="SM01403">
    <property type="entry name" value="Ribosomal_S10"/>
    <property type="match status" value="1"/>
</dbReference>
<dbReference type="SUPFAM" id="SSF54999">
    <property type="entry name" value="Ribosomal protein S10"/>
    <property type="match status" value="1"/>
</dbReference>
<dbReference type="PROSITE" id="PS00361">
    <property type="entry name" value="RIBOSOMAL_S10"/>
    <property type="match status" value="1"/>
</dbReference>
<feature type="chain" id="PRO_1000127184" description="Small ribosomal subunit protein uS10">
    <location>
        <begin position="1"/>
        <end position="103"/>
    </location>
</feature>
<accession>B2U2T9</accession>
<name>RS10_SHIB3</name>